<feature type="chain" id="PRO_0000457340" description="MFS-type transporter grgE">
    <location>
        <begin position="1"/>
        <end position="564"/>
    </location>
</feature>
<feature type="transmembrane region" description="Helical" evidence="1">
    <location>
        <begin position="60"/>
        <end position="80"/>
    </location>
</feature>
<feature type="transmembrane region" description="Helical" evidence="1">
    <location>
        <begin position="101"/>
        <end position="118"/>
    </location>
</feature>
<feature type="transmembrane region" description="Helical" evidence="1">
    <location>
        <begin position="131"/>
        <end position="151"/>
    </location>
</feature>
<feature type="transmembrane region" description="Helical" evidence="1">
    <location>
        <begin position="161"/>
        <end position="181"/>
    </location>
</feature>
<feature type="transmembrane region" description="Helical" evidence="1">
    <location>
        <begin position="192"/>
        <end position="212"/>
    </location>
</feature>
<feature type="transmembrane region" description="Helical" evidence="1">
    <location>
        <begin position="220"/>
        <end position="240"/>
    </location>
</feature>
<feature type="transmembrane region" description="Helical" evidence="1">
    <location>
        <begin position="262"/>
        <end position="282"/>
    </location>
</feature>
<feature type="transmembrane region" description="Helical" evidence="1">
    <location>
        <begin position="293"/>
        <end position="313"/>
    </location>
</feature>
<feature type="transmembrane region" description="Helical" evidence="1">
    <location>
        <begin position="329"/>
        <end position="349"/>
    </location>
</feature>
<feature type="transmembrane region" description="Helical" evidence="1">
    <location>
        <begin position="368"/>
        <end position="388"/>
    </location>
</feature>
<feature type="transmembrane region" description="Helical" evidence="1">
    <location>
        <begin position="392"/>
        <end position="412"/>
    </location>
</feature>
<feature type="transmembrane region" description="Helical" evidence="1">
    <location>
        <begin position="425"/>
        <end position="445"/>
    </location>
</feature>
<feature type="transmembrane region" description="Helical" evidence="1">
    <location>
        <begin position="462"/>
        <end position="482"/>
    </location>
</feature>
<feature type="transmembrane region" description="Helical" evidence="1">
    <location>
        <begin position="531"/>
        <end position="551"/>
    </location>
</feature>
<feature type="region of interest" description="Disordered" evidence="3">
    <location>
        <begin position="1"/>
        <end position="52"/>
    </location>
</feature>
<feature type="compositionally biased region" description="Basic and acidic residues" evidence="3">
    <location>
        <begin position="1"/>
        <end position="10"/>
    </location>
</feature>
<feature type="glycosylation site" description="N-linked (GlcNAc...) asparagine" evidence="2">
    <location>
        <position position="37"/>
    </location>
</feature>
<feature type="glycosylation site" description="N-linked (GlcNAc...) asparagine" evidence="2">
    <location>
        <position position="289"/>
    </location>
</feature>
<keyword id="KW-0325">Glycoprotein</keyword>
<keyword id="KW-0472">Membrane</keyword>
<keyword id="KW-0812">Transmembrane</keyword>
<keyword id="KW-1133">Transmembrane helix</keyword>
<keyword id="KW-0813">Transport</keyword>
<organism>
    <name type="scientific">Penicillium sp</name>
    <dbReference type="NCBI Taxonomy" id="5081"/>
    <lineage>
        <taxon>Eukaryota</taxon>
        <taxon>Fungi</taxon>
        <taxon>Dikarya</taxon>
        <taxon>Ascomycota</taxon>
        <taxon>Pezizomycotina</taxon>
        <taxon>Eurotiomycetes</taxon>
        <taxon>Eurotiomycetidae</taxon>
        <taxon>Eurotiales</taxon>
        <taxon>Aspergillaceae</taxon>
        <taxon>Penicillium</taxon>
    </lineage>
</organism>
<comment type="function">
    <text evidence="4">MFS-type transporter; part of the gene cluster that mediates the biosynthesis of gregatin A, a fungal polyketide featuring an alkylated furanone core.</text>
</comment>
<comment type="subcellular location">
    <subcellularLocation>
        <location evidence="1">Membrane</location>
        <topology evidence="1">Multi-pass membrane protein</topology>
    </subcellularLocation>
</comment>
<comment type="similarity">
    <text evidence="6">Belongs to the major facilitator superfamily.</text>
</comment>
<gene>
    <name evidence="5" type="primary">grgE</name>
</gene>
<protein>
    <recommendedName>
        <fullName evidence="5">MFS-type transporter grgE</fullName>
    </recommendedName>
    <alternativeName>
        <fullName evidence="5">Gregatin A biosynthesis cluster protein E</fullName>
    </alternativeName>
</protein>
<dbReference type="EMBL" id="LC522971">
    <property type="protein sequence ID" value="BCA42572.1"/>
    <property type="molecule type" value="Genomic_DNA"/>
</dbReference>
<dbReference type="SMR" id="A0A6F8RNA5"/>
<dbReference type="GO" id="GO:0005886">
    <property type="term" value="C:plasma membrane"/>
    <property type="evidence" value="ECO:0007669"/>
    <property type="project" value="TreeGrafter"/>
</dbReference>
<dbReference type="GO" id="GO:0022857">
    <property type="term" value="F:transmembrane transporter activity"/>
    <property type="evidence" value="ECO:0007669"/>
    <property type="project" value="InterPro"/>
</dbReference>
<dbReference type="CDD" id="cd17502">
    <property type="entry name" value="MFS_Azr1_MDR_like"/>
    <property type="match status" value="1"/>
</dbReference>
<dbReference type="FunFam" id="1.20.1250.20:FF:000196">
    <property type="entry name" value="MFS toxin efflux pump (AflT)"/>
    <property type="match status" value="1"/>
</dbReference>
<dbReference type="FunFam" id="1.20.1720.10:FF:000012">
    <property type="entry name" value="MFS toxin efflux pump (AflT)"/>
    <property type="match status" value="1"/>
</dbReference>
<dbReference type="Gene3D" id="1.20.1250.20">
    <property type="entry name" value="MFS general substrate transporter like domains"/>
    <property type="match status" value="2"/>
</dbReference>
<dbReference type="InterPro" id="IPR011701">
    <property type="entry name" value="MFS"/>
</dbReference>
<dbReference type="InterPro" id="IPR020846">
    <property type="entry name" value="MFS_dom"/>
</dbReference>
<dbReference type="InterPro" id="IPR036259">
    <property type="entry name" value="MFS_trans_sf"/>
</dbReference>
<dbReference type="PANTHER" id="PTHR23501">
    <property type="entry name" value="MAJOR FACILITATOR SUPERFAMILY"/>
    <property type="match status" value="1"/>
</dbReference>
<dbReference type="PANTHER" id="PTHR23501:SF177">
    <property type="entry name" value="MAJOR FACILITATOR SUPERFAMILY (MFS) PROFILE DOMAIN-CONTAINING PROTEIN-RELATED"/>
    <property type="match status" value="1"/>
</dbReference>
<dbReference type="Pfam" id="PF07690">
    <property type="entry name" value="MFS_1"/>
    <property type="match status" value="1"/>
</dbReference>
<dbReference type="SUPFAM" id="SSF103473">
    <property type="entry name" value="MFS general substrate transporter"/>
    <property type="match status" value="1"/>
</dbReference>
<dbReference type="PROSITE" id="PS50850">
    <property type="entry name" value="MFS"/>
    <property type="match status" value="1"/>
</dbReference>
<proteinExistence type="inferred from homology"/>
<name>GRGE_PENSQ</name>
<reference key="1">
    <citation type="journal article" date="2020" name="J. Am. Chem. Soc.">
        <title>Molecular basis for the biosynthesis of an unusual chain-fused polyketide gregatin A.</title>
        <authorList>
            <person name="Wang W.G."/>
            <person name="Wang H."/>
            <person name="Du L.Q."/>
            <person name="Li M."/>
            <person name="Chen L."/>
            <person name="Yu J."/>
            <person name="Cheng G.G."/>
            <person name="Zhan M.T."/>
            <person name="Hu Q.F."/>
            <person name="Zhang L."/>
            <person name="Yao M."/>
            <person name="Matsuda Y."/>
        </authorList>
    </citation>
    <scope>NUCLEOTIDE SEQUENCE [GENOMIC DNA]</scope>
    <scope>FUNCTION</scope>
    <source>
        <strain>Sh18</strain>
    </source>
</reference>
<evidence type="ECO:0000255" key="1"/>
<evidence type="ECO:0000255" key="2">
    <source>
        <dbReference type="PROSITE-ProRule" id="PRU00498"/>
    </source>
</evidence>
<evidence type="ECO:0000256" key="3">
    <source>
        <dbReference type="SAM" id="MobiDB-lite"/>
    </source>
</evidence>
<evidence type="ECO:0000269" key="4">
    <source>
    </source>
</evidence>
<evidence type="ECO:0000303" key="5">
    <source>
    </source>
</evidence>
<evidence type="ECO:0000305" key="6"/>
<accession>A0A6F8RNA5</accession>
<sequence length="564" mass="60118">MAENQVDPKRNLPLYGAADESTSATDKEDEVENVRQNGSAPPIEEARESNEAPAADEYPHGLSLFFIVLAIMLATFIISLDQTIVGTAIPKITDQFHGLDKVSWYGSAYFMTFGGFQTSMGKAYRYFSLKTTFLVSLFIFEIGSLICGVAPNANALIAGRAIAGLGGAGMATGGFTIIAFSSEPKRRPLFTGLVGSAYGLSAVAGPLIGGAFSDKVSWRWCFYINLPVGGLAAVIILIFFHSPSGAKPVKAPLKEKILNMDLVGVSLLMCLIICFILALQYGGQTESWNSSKVIGLLVGFVAILVALIIWEYYLGERAMLVGRLLKKRALWAPSTYMFFFAGSYFILLYYLPTYFQSIDDTSPIGSGVRNLPMVVTFSIAAILAGAFVERTGIATPVMLVGAAIATIGTGLIYTWDIGTPAGKWIGYQILAAFGFVIPWLIPMNIAQANADAQDMSTVTAYIFLAQTLGGAFSVSAAQSAFVNTMLTKIKTTAPDVDPMALIATGATQIRATFPNDIHGVLLAYMAGLKATFAISVGMVGFACLMGLFTPWNRLHGSAGGAAFA</sequence>